<feature type="chain" id="PRO_1000099254" description="Diaminopimelate epimerase">
    <location>
        <begin position="1"/>
        <end position="280"/>
    </location>
</feature>
<feature type="active site" description="Proton donor" evidence="1">
    <location>
        <position position="73"/>
    </location>
</feature>
<feature type="active site" description="Proton acceptor" evidence="1">
    <location>
        <position position="222"/>
    </location>
</feature>
<feature type="binding site" evidence="1">
    <location>
        <position position="11"/>
    </location>
    <ligand>
        <name>substrate</name>
    </ligand>
</feature>
<feature type="binding site" evidence="1">
    <location>
        <position position="64"/>
    </location>
    <ligand>
        <name>substrate</name>
    </ligand>
</feature>
<feature type="binding site" evidence="1">
    <location>
        <begin position="74"/>
        <end position="75"/>
    </location>
    <ligand>
        <name>substrate</name>
    </ligand>
</feature>
<feature type="binding site" evidence="1">
    <location>
        <position position="162"/>
    </location>
    <ligand>
        <name>substrate</name>
    </ligand>
</feature>
<feature type="binding site" evidence="1">
    <location>
        <position position="195"/>
    </location>
    <ligand>
        <name>substrate</name>
    </ligand>
</feature>
<feature type="binding site" evidence="1">
    <location>
        <begin position="213"/>
        <end position="214"/>
    </location>
    <ligand>
        <name>substrate</name>
    </ligand>
</feature>
<feature type="binding site" evidence="1">
    <location>
        <begin position="223"/>
        <end position="224"/>
    </location>
    <ligand>
        <name>substrate</name>
    </ligand>
</feature>
<feature type="site" description="Could be important to modulate the pK values of the two catalytic cysteine residues" evidence="1">
    <location>
        <position position="164"/>
    </location>
</feature>
<feature type="site" description="Could be important to modulate the pK values of the two catalytic cysteine residues" evidence="1">
    <location>
        <position position="213"/>
    </location>
</feature>
<accession>A5D193</accession>
<proteinExistence type="inferred from homology"/>
<gene>
    <name evidence="1" type="primary">dapF</name>
    <name type="ordered locus">PTH_1800</name>
</gene>
<dbReference type="EC" id="5.1.1.7" evidence="1"/>
<dbReference type="EMBL" id="AP009389">
    <property type="protein sequence ID" value="BAF59981.1"/>
    <property type="molecule type" value="Genomic_DNA"/>
</dbReference>
<dbReference type="SMR" id="A5D193"/>
<dbReference type="STRING" id="370438.PTH_1800"/>
<dbReference type="KEGG" id="pth:PTH_1800"/>
<dbReference type="eggNOG" id="COG0253">
    <property type="taxonomic scope" value="Bacteria"/>
</dbReference>
<dbReference type="HOGENOM" id="CLU_053306_3_0_9"/>
<dbReference type="UniPathway" id="UPA00034">
    <property type="reaction ID" value="UER00025"/>
</dbReference>
<dbReference type="Proteomes" id="UP000006556">
    <property type="component" value="Chromosome"/>
</dbReference>
<dbReference type="GO" id="GO:0005829">
    <property type="term" value="C:cytosol"/>
    <property type="evidence" value="ECO:0007669"/>
    <property type="project" value="TreeGrafter"/>
</dbReference>
<dbReference type="GO" id="GO:0008837">
    <property type="term" value="F:diaminopimelate epimerase activity"/>
    <property type="evidence" value="ECO:0007669"/>
    <property type="project" value="UniProtKB-UniRule"/>
</dbReference>
<dbReference type="GO" id="GO:0009089">
    <property type="term" value="P:lysine biosynthetic process via diaminopimelate"/>
    <property type="evidence" value="ECO:0007669"/>
    <property type="project" value="UniProtKB-UniRule"/>
</dbReference>
<dbReference type="FunFam" id="3.10.310.10:FF:000001">
    <property type="entry name" value="Diaminopimelate epimerase"/>
    <property type="match status" value="1"/>
</dbReference>
<dbReference type="FunFam" id="3.10.310.10:FF:000004">
    <property type="entry name" value="Diaminopimelate epimerase"/>
    <property type="match status" value="1"/>
</dbReference>
<dbReference type="Gene3D" id="3.10.310.10">
    <property type="entry name" value="Diaminopimelate Epimerase, Chain A, domain 1"/>
    <property type="match status" value="2"/>
</dbReference>
<dbReference type="HAMAP" id="MF_00197">
    <property type="entry name" value="DAP_epimerase"/>
    <property type="match status" value="1"/>
</dbReference>
<dbReference type="InterPro" id="IPR018510">
    <property type="entry name" value="DAP_epimerase_AS"/>
</dbReference>
<dbReference type="InterPro" id="IPR001653">
    <property type="entry name" value="DAP_epimerase_DapF"/>
</dbReference>
<dbReference type="NCBIfam" id="TIGR00652">
    <property type="entry name" value="DapF"/>
    <property type="match status" value="1"/>
</dbReference>
<dbReference type="PANTHER" id="PTHR31689:SF0">
    <property type="entry name" value="DIAMINOPIMELATE EPIMERASE"/>
    <property type="match status" value="1"/>
</dbReference>
<dbReference type="PANTHER" id="PTHR31689">
    <property type="entry name" value="DIAMINOPIMELATE EPIMERASE, CHLOROPLASTIC"/>
    <property type="match status" value="1"/>
</dbReference>
<dbReference type="Pfam" id="PF01678">
    <property type="entry name" value="DAP_epimerase"/>
    <property type="match status" value="2"/>
</dbReference>
<dbReference type="SUPFAM" id="SSF54506">
    <property type="entry name" value="Diaminopimelate epimerase-like"/>
    <property type="match status" value="1"/>
</dbReference>
<dbReference type="PROSITE" id="PS01326">
    <property type="entry name" value="DAP_EPIMERASE"/>
    <property type="match status" value="1"/>
</dbReference>
<sequence length="280" mass="30690">MHFTKAHGLGNDFILVDCFKEKVNPEDFPGLAVKMCDRHFGVGADGLVLLLPSPSADVSMRIFNPDGSEAEMCGNAIRCVAKYLYERGMVKADRIRVETLAGVMIPELLVEEGRVRLVRVDMGEPRLERSEIPMEGPPGRVLGEPLETGGAVYRITAVSMGNPHCVIFVQDLDAVPFQTAGPLIETHPAFPRRTNVEFIQVLTPEEIKMRVWERGAGETMACGTGACAAVVAGVLNGYTGRRVTVHLKAGDLFIEWPEGKHVYMSGPAEEVFSGEYPYRT</sequence>
<name>DAPF_PELTS</name>
<evidence type="ECO:0000255" key="1">
    <source>
        <dbReference type="HAMAP-Rule" id="MF_00197"/>
    </source>
</evidence>
<keyword id="KW-0028">Amino-acid biosynthesis</keyword>
<keyword id="KW-0963">Cytoplasm</keyword>
<keyword id="KW-0413">Isomerase</keyword>
<keyword id="KW-0457">Lysine biosynthesis</keyword>
<keyword id="KW-1185">Reference proteome</keyword>
<protein>
    <recommendedName>
        <fullName evidence="1">Diaminopimelate epimerase</fullName>
        <shortName evidence="1">DAP epimerase</shortName>
        <ecNumber evidence="1">5.1.1.7</ecNumber>
    </recommendedName>
    <alternativeName>
        <fullName evidence="1">PLP-independent amino acid racemase</fullName>
    </alternativeName>
</protein>
<organism>
    <name type="scientific">Pelotomaculum thermopropionicum (strain DSM 13744 / JCM 10971 / SI)</name>
    <dbReference type="NCBI Taxonomy" id="370438"/>
    <lineage>
        <taxon>Bacteria</taxon>
        <taxon>Bacillati</taxon>
        <taxon>Bacillota</taxon>
        <taxon>Clostridia</taxon>
        <taxon>Eubacteriales</taxon>
        <taxon>Desulfotomaculaceae</taxon>
        <taxon>Pelotomaculum</taxon>
    </lineage>
</organism>
<comment type="function">
    <text evidence="1">Catalyzes the stereoinversion of LL-2,6-diaminopimelate (L,L-DAP) to meso-diaminopimelate (meso-DAP), a precursor of L-lysine and an essential component of the bacterial peptidoglycan.</text>
</comment>
<comment type="catalytic activity">
    <reaction evidence="1">
        <text>(2S,6S)-2,6-diaminopimelate = meso-2,6-diaminopimelate</text>
        <dbReference type="Rhea" id="RHEA:15393"/>
        <dbReference type="ChEBI" id="CHEBI:57609"/>
        <dbReference type="ChEBI" id="CHEBI:57791"/>
        <dbReference type="EC" id="5.1.1.7"/>
    </reaction>
</comment>
<comment type="pathway">
    <text evidence="1">Amino-acid biosynthesis; L-lysine biosynthesis via DAP pathway; DL-2,6-diaminopimelate from LL-2,6-diaminopimelate: step 1/1.</text>
</comment>
<comment type="subunit">
    <text evidence="1">Homodimer.</text>
</comment>
<comment type="subcellular location">
    <subcellularLocation>
        <location evidence="1">Cytoplasm</location>
    </subcellularLocation>
</comment>
<comment type="similarity">
    <text evidence="1">Belongs to the diaminopimelate epimerase family.</text>
</comment>
<reference key="1">
    <citation type="journal article" date="2008" name="Genome Res.">
        <title>The genome of Pelotomaculum thermopropionicum reveals niche-associated evolution in anaerobic microbiota.</title>
        <authorList>
            <person name="Kosaka T."/>
            <person name="Kato S."/>
            <person name="Shimoyama T."/>
            <person name="Ishii S."/>
            <person name="Abe T."/>
            <person name="Watanabe K."/>
        </authorList>
    </citation>
    <scope>NUCLEOTIDE SEQUENCE [LARGE SCALE GENOMIC DNA]</scope>
    <source>
        <strain>DSM 13744 / JCM 10971 / SI</strain>
    </source>
</reference>